<sequence length="171" mass="19330">MSENTFSDTTSIYNQNLSNQGFILANLENLVSWARTRSLWPMTFGLACCAIEMMQTAGSRYDMDRYGMLFRPSPRQADVMIVAGTLTNKMAPALRRVYDQMTEPKWVISMGSCANGGGYYHYSYSVVRGCDKIVPVDIYVPGCPPTPEALLYGILQLQKKINRTQQVKFKR</sequence>
<reference key="1">
    <citation type="journal article" date="2008" name="DNA Res.">
        <title>The whole-genome sequencing of the obligate intracellular bacterium Orientia tsutsugamushi revealed massive gene amplification during reductive genome evolution.</title>
        <authorList>
            <person name="Nakayama K."/>
            <person name="Yamashita A."/>
            <person name="Kurokawa K."/>
            <person name="Morimoto T."/>
            <person name="Ogawa M."/>
            <person name="Fukuhara M."/>
            <person name="Urakami H."/>
            <person name="Ohnishi M."/>
            <person name="Uchiyama I."/>
            <person name="Ogura Y."/>
            <person name="Ooka T."/>
            <person name="Oshima K."/>
            <person name="Tamura A."/>
            <person name="Hattori M."/>
            <person name="Hayashi T."/>
        </authorList>
    </citation>
    <scope>NUCLEOTIDE SEQUENCE [LARGE SCALE GENOMIC DNA]</scope>
    <source>
        <strain>Ikeda</strain>
    </source>
</reference>
<comment type="function">
    <text evidence="1">NDH-1 shuttles electrons from NADH, via FMN and iron-sulfur (Fe-S) centers, to quinones in the respiratory chain. Couples the redox reaction to proton translocation (for every two electrons transferred, four hydrogen ions are translocated across the cytoplasmic membrane), and thus conserves the redox energy in a proton gradient (By similarity).</text>
</comment>
<comment type="catalytic activity">
    <reaction evidence="2">
        <text>a quinone + NADH + 5 H(+)(in) = a quinol + NAD(+) + 4 H(+)(out)</text>
        <dbReference type="Rhea" id="RHEA:57888"/>
        <dbReference type="ChEBI" id="CHEBI:15378"/>
        <dbReference type="ChEBI" id="CHEBI:24646"/>
        <dbReference type="ChEBI" id="CHEBI:57540"/>
        <dbReference type="ChEBI" id="CHEBI:57945"/>
        <dbReference type="ChEBI" id="CHEBI:132124"/>
    </reaction>
</comment>
<comment type="cofactor">
    <cofactor evidence="2">
        <name>[4Fe-4S] cluster</name>
        <dbReference type="ChEBI" id="CHEBI:49883"/>
    </cofactor>
    <text evidence="2">Binds 1 [4Fe-4S] cluster.</text>
</comment>
<comment type="subunit">
    <text evidence="2">NDH-1 is composed of 14 different subunits. Subunits NuoB, C, D, E, F, and G constitute the peripheral sector of the complex.</text>
</comment>
<comment type="subcellular location">
    <subcellularLocation>
        <location evidence="2">Cell inner membrane</location>
        <topology evidence="2">Peripheral membrane protein</topology>
        <orientation evidence="2">Cytoplasmic side</orientation>
    </subcellularLocation>
</comment>
<comment type="similarity">
    <text evidence="2">Belongs to the complex I 20 kDa subunit family.</text>
</comment>
<evidence type="ECO:0000250" key="1"/>
<evidence type="ECO:0000255" key="2">
    <source>
        <dbReference type="HAMAP-Rule" id="MF_01356"/>
    </source>
</evidence>
<accession>B3CSG9</accession>
<organism>
    <name type="scientific">Orientia tsutsugamushi (strain Ikeda)</name>
    <name type="common">Rickettsia tsutsugamushi</name>
    <dbReference type="NCBI Taxonomy" id="334380"/>
    <lineage>
        <taxon>Bacteria</taxon>
        <taxon>Pseudomonadati</taxon>
        <taxon>Pseudomonadota</taxon>
        <taxon>Alphaproteobacteria</taxon>
        <taxon>Rickettsiales</taxon>
        <taxon>Rickettsiaceae</taxon>
        <taxon>Rickettsieae</taxon>
        <taxon>Orientia</taxon>
    </lineage>
</organism>
<name>NUOB_ORITI</name>
<protein>
    <recommendedName>
        <fullName evidence="2">NADH-quinone oxidoreductase subunit B</fullName>
        <ecNumber evidence="2">7.1.1.-</ecNumber>
    </recommendedName>
    <alternativeName>
        <fullName evidence="2">NADH dehydrogenase I subunit B</fullName>
    </alternativeName>
    <alternativeName>
        <fullName evidence="2">NDH-1 subunit B</fullName>
    </alternativeName>
</protein>
<dbReference type="EC" id="7.1.1.-" evidence="2"/>
<dbReference type="EMBL" id="AP008981">
    <property type="protein sequence ID" value="BAG40370.1"/>
    <property type="molecule type" value="Genomic_DNA"/>
</dbReference>
<dbReference type="RefSeq" id="WP_011944977.1">
    <property type="nucleotide sequence ID" value="NC_010793.1"/>
</dbReference>
<dbReference type="SMR" id="B3CSG9"/>
<dbReference type="KEGG" id="ott:OTT_0912"/>
<dbReference type="HOGENOM" id="CLU_055737_7_0_5"/>
<dbReference type="OrthoDB" id="9786737at2"/>
<dbReference type="Proteomes" id="UP000001033">
    <property type="component" value="Chromosome"/>
</dbReference>
<dbReference type="GO" id="GO:0005886">
    <property type="term" value="C:plasma membrane"/>
    <property type="evidence" value="ECO:0007669"/>
    <property type="project" value="UniProtKB-SubCell"/>
</dbReference>
<dbReference type="GO" id="GO:0045271">
    <property type="term" value="C:respiratory chain complex I"/>
    <property type="evidence" value="ECO:0007669"/>
    <property type="project" value="TreeGrafter"/>
</dbReference>
<dbReference type="GO" id="GO:0051539">
    <property type="term" value="F:4 iron, 4 sulfur cluster binding"/>
    <property type="evidence" value="ECO:0007669"/>
    <property type="project" value="UniProtKB-KW"/>
</dbReference>
<dbReference type="GO" id="GO:0005506">
    <property type="term" value="F:iron ion binding"/>
    <property type="evidence" value="ECO:0007669"/>
    <property type="project" value="UniProtKB-UniRule"/>
</dbReference>
<dbReference type="GO" id="GO:0008137">
    <property type="term" value="F:NADH dehydrogenase (ubiquinone) activity"/>
    <property type="evidence" value="ECO:0007669"/>
    <property type="project" value="InterPro"/>
</dbReference>
<dbReference type="GO" id="GO:0050136">
    <property type="term" value="F:NADH:ubiquinone reductase (non-electrogenic) activity"/>
    <property type="evidence" value="ECO:0007669"/>
    <property type="project" value="UniProtKB-UniRule"/>
</dbReference>
<dbReference type="GO" id="GO:0048038">
    <property type="term" value="F:quinone binding"/>
    <property type="evidence" value="ECO:0007669"/>
    <property type="project" value="UniProtKB-KW"/>
</dbReference>
<dbReference type="GO" id="GO:0009060">
    <property type="term" value="P:aerobic respiration"/>
    <property type="evidence" value="ECO:0007669"/>
    <property type="project" value="TreeGrafter"/>
</dbReference>
<dbReference type="GO" id="GO:0015990">
    <property type="term" value="P:electron transport coupled proton transport"/>
    <property type="evidence" value="ECO:0007669"/>
    <property type="project" value="TreeGrafter"/>
</dbReference>
<dbReference type="FunFam" id="3.40.50.12280:FF:000001">
    <property type="entry name" value="NADH-quinone oxidoreductase subunit B 2"/>
    <property type="match status" value="1"/>
</dbReference>
<dbReference type="Gene3D" id="3.40.50.12280">
    <property type="match status" value="1"/>
</dbReference>
<dbReference type="HAMAP" id="MF_01356">
    <property type="entry name" value="NDH1_NuoB"/>
    <property type="match status" value="1"/>
</dbReference>
<dbReference type="InterPro" id="IPR006137">
    <property type="entry name" value="NADH_UbQ_OxRdtase-like_20kDa"/>
</dbReference>
<dbReference type="InterPro" id="IPR006138">
    <property type="entry name" value="NADH_UQ_OxRdtase_20Kd_su"/>
</dbReference>
<dbReference type="NCBIfam" id="TIGR01957">
    <property type="entry name" value="nuoB_fam"/>
    <property type="match status" value="1"/>
</dbReference>
<dbReference type="NCBIfam" id="NF005012">
    <property type="entry name" value="PRK06411.1"/>
    <property type="match status" value="1"/>
</dbReference>
<dbReference type="PANTHER" id="PTHR11995">
    <property type="entry name" value="NADH DEHYDROGENASE"/>
    <property type="match status" value="1"/>
</dbReference>
<dbReference type="PANTHER" id="PTHR11995:SF14">
    <property type="entry name" value="NADH DEHYDROGENASE [UBIQUINONE] IRON-SULFUR PROTEIN 7, MITOCHONDRIAL"/>
    <property type="match status" value="1"/>
</dbReference>
<dbReference type="Pfam" id="PF01058">
    <property type="entry name" value="Oxidored_q6"/>
    <property type="match status" value="1"/>
</dbReference>
<dbReference type="SUPFAM" id="SSF56770">
    <property type="entry name" value="HydA/Nqo6-like"/>
    <property type="match status" value="1"/>
</dbReference>
<dbReference type="PROSITE" id="PS01150">
    <property type="entry name" value="COMPLEX1_20K"/>
    <property type="match status" value="1"/>
</dbReference>
<proteinExistence type="inferred from homology"/>
<gene>
    <name evidence="2" type="primary">nuoB</name>
    <name type="ordered locus">OTT_0912</name>
</gene>
<feature type="chain" id="PRO_0000358440" description="NADH-quinone oxidoreductase subunit B">
    <location>
        <begin position="1"/>
        <end position="171"/>
    </location>
</feature>
<feature type="binding site" evidence="2">
    <location>
        <position position="48"/>
    </location>
    <ligand>
        <name>[4Fe-4S] cluster</name>
        <dbReference type="ChEBI" id="CHEBI:49883"/>
    </ligand>
</feature>
<feature type="binding site" evidence="2">
    <location>
        <position position="49"/>
    </location>
    <ligand>
        <name>[4Fe-4S] cluster</name>
        <dbReference type="ChEBI" id="CHEBI:49883"/>
    </ligand>
</feature>
<feature type="binding site" evidence="2">
    <location>
        <position position="113"/>
    </location>
    <ligand>
        <name>[4Fe-4S] cluster</name>
        <dbReference type="ChEBI" id="CHEBI:49883"/>
    </ligand>
</feature>
<feature type="binding site" evidence="2">
    <location>
        <position position="143"/>
    </location>
    <ligand>
        <name>[4Fe-4S] cluster</name>
        <dbReference type="ChEBI" id="CHEBI:49883"/>
    </ligand>
</feature>
<keyword id="KW-0004">4Fe-4S</keyword>
<keyword id="KW-0997">Cell inner membrane</keyword>
<keyword id="KW-1003">Cell membrane</keyword>
<keyword id="KW-0408">Iron</keyword>
<keyword id="KW-0411">Iron-sulfur</keyword>
<keyword id="KW-0472">Membrane</keyword>
<keyword id="KW-0479">Metal-binding</keyword>
<keyword id="KW-0520">NAD</keyword>
<keyword id="KW-0874">Quinone</keyword>
<keyword id="KW-1278">Translocase</keyword>
<keyword id="KW-0813">Transport</keyword>
<keyword id="KW-0830">Ubiquinone</keyword>